<feature type="chain" id="PRO_1000080135" description="Small ribosomal subunit protein bS16">
    <location>
        <begin position="1"/>
        <end position="90"/>
    </location>
</feature>
<comment type="similarity">
    <text evidence="1">Belongs to the bacterial ribosomal protein bS16 family.</text>
</comment>
<dbReference type="EMBL" id="CP000764">
    <property type="protein sequence ID" value="ABS22732.1"/>
    <property type="molecule type" value="Genomic_DNA"/>
</dbReference>
<dbReference type="RefSeq" id="WP_012094939.1">
    <property type="nucleotide sequence ID" value="NC_009674.1"/>
</dbReference>
<dbReference type="SMR" id="A7GRH4"/>
<dbReference type="STRING" id="315749.Bcer98_2496"/>
<dbReference type="GeneID" id="33897751"/>
<dbReference type="KEGG" id="bcy:Bcer98_2496"/>
<dbReference type="eggNOG" id="COG0228">
    <property type="taxonomic scope" value="Bacteria"/>
</dbReference>
<dbReference type="HOGENOM" id="CLU_100590_5_0_9"/>
<dbReference type="OrthoDB" id="9807878at2"/>
<dbReference type="Proteomes" id="UP000002300">
    <property type="component" value="Chromosome"/>
</dbReference>
<dbReference type="GO" id="GO:0005737">
    <property type="term" value="C:cytoplasm"/>
    <property type="evidence" value="ECO:0007669"/>
    <property type="project" value="UniProtKB-ARBA"/>
</dbReference>
<dbReference type="GO" id="GO:0015935">
    <property type="term" value="C:small ribosomal subunit"/>
    <property type="evidence" value="ECO:0007669"/>
    <property type="project" value="TreeGrafter"/>
</dbReference>
<dbReference type="GO" id="GO:0003735">
    <property type="term" value="F:structural constituent of ribosome"/>
    <property type="evidence" value="ECO:0007669"/>
    <property type="project" value="InterPro"/>
</dbReference>
<dbReference type="GO" id="GO:0006412">
    <property type="term" value="P:translation"/>
    <property type="evidence" value="ECO:0007669"/>
    <property type="project" value="UniProtKB-UniRule"/>
</dbReference>
<dbReference type="FunFam" id="3.30.1320.10:FF:000002">
    <property type="entry name" value="30S ribosomal protein S16"/>
    <property type="match status" value="1"/>
</dbReference>
<dbReference type="Gene3D" id="3.30.1320.10">
    <property type="match status" value="1"/>
</dbReference>
<dbReference type="HAMAP" id="MF_00385">
    <property type="entry name" value="Ribosomal_bS16"/>
    <property type="match status" value="1"/>
</dbReference>
<dbReference type="InterPro" id="IPR000307">
    <property type="entry name" value="Ribosomal_bS16"/>
</dbReference>
<dbReference type="InterPro" id="IPR020592">
    <property type="entry name" value="Ribosomal_bS16_CS"/>
</dbReference>
<dbReference type="InterPro" id="IPR023803">
    <property type="entry name" value="Ribosomal_bS16_dom_sf"/>
</dbReference>
<dbReference type="NCBIfam" id="TIGR00002">
    <property type="entry name" value="S16"/>
    <property type="match status" value="1"/>
</dbReference>
<dbReference type="PANTHER" id="PTHR12919">
    <property type="entry name" value="30S RIBOSOMAL PROTEIN S16"/>
    <property type="match status" value="1"/>
</dbReference>
<dbReference type="PANTHER" id="PTHR12919:SF20">
    <property type="entry name" value="SMALL RIBOSOMAL SUBUNIT PROTEIN BS16M"/>
    <property type="match status" value="1"/>
</dbReference>
<dbReference type="Pfam" id="PF00886">
    <property type="entry name" value="Ribosomal_S16"/>
    <property type="match status" value="1"/>
</dbReference>
<dbReference type="SUPFAM" id="SSF54565">
    <property type="entry name" value="Ribosomal protein S16"/>
    <property type="match status" value="1"/>
</dbReference>
<dbReference type="PROSITE" id="PS00732">
    <property type="entry name" value="RIBOSOMAL_S16"/>
    <property type="match status" value="1"/>
</dbReference>
<proteinExistence type="inferred from homology"/>
<reference key="1">
    <citation type="journal article" date="2008" name="Chem. Biol. Interact.">
        <title>Extending the Bacillus cereus group genomics to putative food-borne pathogens of different toxicity.</title>
        <authorList>
            <person name="Lapidus A."/>
            <person name="Goltsman E."/>
            <person name="Auger S."/>
            <person name="Galleron N."/>
            <person name="Segurens B."/>
            <person name="Dossat C."/>
            <person name="Land M.L."/>
            <person name="Broussolle V."/>
            <person name="Brillard J."/>
            <person name="Guinebretiere M.-H."/>
            <person name="Sanchis V."/>
            <person name="Nguen-the C."/>
            <person name="Lereclus D."/>
            <person name="Richardson P."/>
            <person name="Wincker P."/>
            <person name="Weissenbach J."/>
            <person name="Ehrlich S.D."/>
            <person name="Sorokin A."/>
        </authorList>
    </citation>
    <scope>NUCLEOTIDE SEQUENCE [LARGE SCALE GENOMIC DNA]</scope>
    <source>
        <strain>DSM 22905 / CIP 110041 / 391-98 / NVH 391-98</strain>
    </source>
</reference>
<evidence type="ECO:0000255" key="1">
    <source>
        <dbReference type="HAMAP-Rule" id="MF_00385"/>
    </source>
</evidence>
<evidence type="ECO:0000305" key="2"/>
<sequence length="90" mass="10078">MAVKIRLKRMGAKKSPFYRVVVADSRSPRDGRFIEEIGTYNPVAQPAEVKIDEEAALKWLGNGAKPSDTVRNLFSSQGIMEKFHLSKQGK</sequence>
<accession>A7GRH4</accession>
<gene>
    <name evidence="1" type="primary">rpsP</name>
    <name type="ordered locus">Bcer98_2496</name>
</gene>
<protein>
    <recommendedName>
        <fullName evidence="1">Small ribosomal subunit protein bS16</fullName>
    </recommendedName>
    <alternativeName>
        <fullName evidence="2">30S ribosomal protein S16</fullName>
    </alternativeName>
</protein>
<keyword id="KW-0687">Ribonucleoprotein</keyword>
<keyword id="KW-0689">Ribosomal protein</keyword>
<name>RS16_BACCN</name>
<organism>
    <name type="scientific">Bacillus cytotoxicus (strain DSM 22905 / CIP 110041 / 391-98 / NVH 391-98)</name>
    <dbReference type="NCBI Taxonomy" id="315749"/>
    <lineage>
        <taxon>Bacteria</taxon>
        <taxon>Bacillati</taxon>
        <taxon>Bacillota</taxon>
        <taxon>Bacilli</taxon>
        <taxon>Bacillales</taxon>
        <taxon>Bacillaceae</taxon>
        <taxon>Bacillus</taxon>
        <taxon>Bacillus cereus group</taxon>
    </lineage>
</organism>